<comment type="catalytic activity">
    <reaction evidence="1">
        <text>2-formamido-N(1)-(5-O-phospho-beta-D-ribosyl)acetamidine + ATP = 5-amino-1-(5-phospho-beta-D-ribosyl)imidazole + ADP + phosphate + H(+)</text>
        <dbReference type="Rhea" id="RHEA:23032"/>
        <dbReference type="ChEBI" id="CHEBI:15378"/>
        <dbReference type="ChEBI" id="CHEBI:30616"/>
        <dbReference type="ChEBI" id="CHEBI:43474"/>
        <dbReference type="ChEBI" id="CHEBI:137981"/>
        <dbReference type="ChEBI" id="CHEBI:147287"/>
        <dbReference type="ChEBI" id="CHEBI:456216"/>
        <dbReference type="EC" id="6.3.3.1"/>
    </reaction>
</comment>
<comment type="pathway">
    <text evidence="1">Purine metabolism; IMP biosynthesis via de novo pathway; 5-amino-1-(5-phospho-D-ribosyl)imidazole from N(2)-formyl-N(1)-(5-phospho-D-ribosyl)glycinamide: step 2/2.</text>
</comment>
<comment type="subcellular location">
    <subcellularLocation>
        <location evidence="1">Cytoplasm</location>
    </subcellularLocation>
</comment>
<comment type="similarity">
    <text evidence="1">Belongs to the AIR synthase family.</text>
</comment>
<organism>
    <name type="scientific">Actinobacillus pleuropneumoniae serotype 3 (strain JL03)</name>
    <dbReference type="NCBI Taxonomy" id="434271"/>
    <lineage>
        <taxon>Bacteria</taxon>
        <taxon>Pseudomonadati</taxon>
        <taxon>Pseudomonadota</taxon>
        <taxon>Gammaproteobacteria</taxon>
        <taxon>Pasteurellales</taxon>
        <taxon>Pasteurellaceae</taxon>
        <taxon>Actinobacillus</taxon>
    </lineage>
</organism>
<proteinExistence type="inferred from homology"/>
<dbReference type="EC" id="6.3.3.1" evidence="1"/>
<dbReference type="EMBL" id="CP000687">
    <property type="protein sequence ID" value="ABY69665.1"/>
    <property type="molecule type" value="Genomic_DNA"/>
</dbReference>
<dbReference type="RefSeq" id="WP_005597960.1">
    <property type="nucleotide sequence ID" value="NC_010278.1"/>
</dbReference>
<dbReference type="SMR" id="B0BQ30"/>
<dbReference type="GeneID" id="48599326"/>
<dbReference type="KEGG" id="apj:APJL_1109"/>
<dbReference type="HOGENOM" id="CLU_047116_0_0_6"/>
<dbReference type="UniPathway" id="UPA00074">
    <property type="reaction ID" value="UER00129"/>
</dbReference>
<dbReference type="Proteomes" id="UP000008547">
    <property type="component" value="Chromosome"/>
</dbReference>
<dbReference type="GO" id="GO:0005829">
    <property type="term" value="C:cytosol"/>
    <property type="evidence" value="ECO:0007669"/>
    <property type="project" value="TreeGrafter"/>
</dbReference>
<dbReference type="GO" id="GO:0005524">
    <property type="term" value="F:ATP binding"/>
    <property type="evidence" value="ECO:0007669"/>
    <property type="project" value="UniProtKB-KW"/>
</dbReference>
<dbReference type="GO" id="GO:0004637">
    <property type="term" value="F:phosphoribosylamine-glycine ligase activity"/>
    <property type="evidence" value="ECO:0007669"/>
    <property type="project" value="TreeGrafter"/>
</dbReference>
<dbReference type="GO" id="GO:0004641">
    <property type="term" value="F:phosphoribosylformylglycinamidine cyclo-ligase activity"/>
    <property type="evidence" value="ECO:0007669"/>
    <property type="project" value="UniProtKB-UniRule"/>
</dbReference>
<dbReference type="GO" id="GO:0006189">
    <property type="term" value="P:'de novo' IMP biosynthetic process"/>
    <property type="evidence" value="ECO:0007669"/>
    <property type="project" value="UniProtKB-UniRule"/>
</dbReference>
<dbReference type="GO" id="GO:0046084">
    <property type="term" value="P:adenine biosynthetic process"/>
    <property type="evidence" value="ECO:0007669"/>
    <property type="project" value="TreeGrafter"/>
</dbReference>
<dbReference type="CDD" id="cd02196">
    <property type="entry name" value="PurM"/>
    <property type="match status" value="1"/>
</dbReference>
<dbReference type="FunFam" id="3.30.1330.10:FF:000001">
    <property type="entry name" value="Phosphoribosylformylglycinamidine cyclo-ligase"/>
    <property type="match status" value="1"/>
</dbReference>
<dbReference type="FunFam" id="3.90.650.10:FF:000001">
    <property type="entry name" value="Phosphoribosylformylglycinamidine cyclo-ligase"/>
    <property type="match status" value="1"/>
</dbReference>
<dbReference type="Gene3D" id="3.90.650.10">
    <property type="entry name" value="PurM-like C-terminal domain"/>
    <property type="match status" value="1"/>
</dbReference>
<dbReference type="Gene3D" id="3.30.1330.10">
    <property type="entry name" value="PurM-like, N-terminal domain"/>
    <property type="match status" value="1"/>
</dbReference>
<dbReference type="HAMAP" id="MF_00741">
    <property type="entry name" value="AIRS"/>
    <property type="match status" value="1"/>
</dbReference>
<dbReference type="InterPro" id="IPR010918">
    <property type="entry name" value="PurM-like_C_dom"/>
</dbReference>
<dbReference type="InterPro" id="IPR036676">
    <property type="entry name" value="PurM-like_C_sf"/>
</dbReference>
<dbReference type="InterPro" id="IPR016188">
    <property type="entry name" value="PurM-like_N"/>
</dbReference>
<dbReference type="InterPro" id="IPR036921">
    <property type="entry name" value="PurM-like_N_sf"/>
</dbReference>
<dbReference type="InterPro" id="IPR004733">
    <property type="entry name" value="PurM_cligase"/>
</dbReference>
<dbReference type="NCBIfam" id="TIGR00878">
    <property type="entry name" value="purM"/>
    <property type="match status" value="1"/>
</dbReference>
<dbReference type="PANTHER" id="PTHR10520:SF12">
    <property type="entry name" value="TRIFUNCTIONAL PURINE BIOSYNTHETIC PROTEIN ADENOSINE-3"/>
    <property type="match status" value="1"/>
</dbReference>
<dbReference type="PANTHER" id="PTHR10520">
    <property type="entry name" value="TRIFUNCTIONAL PURINE BIOSYNTHETIC PROTEIN ADENOSINE-3-RELATED"/>
    <property type="match status" value="1"/>
</dbReference>
<dbReference type="Pfam" id="PF00586">
    <property type="entry name" value="AIRS"/>
    <property type="match status" value="1"/>
</dbReference>
<dbReference type="Pfam" id="PF02769">
    <property type="entry name" value="AIRS_C"/>
    <property type="match status" value="1"/>
</dbReference>
<dbReference type="SUPFAM" id="SSF56042">
    <property type="entry name" value="PurM C-terminal domain-like"/>
    <property type="match status" value="1"/>
</dbReference>
<dbReference type="SUPFAM" id="SSF55326">
    <property type="entry name" value="PurM N-terminal domain-like"/>
    <property type="match status" value="1"/>
</dbReference>
<gene>
    <name evidence="1" type="primary">purM</name>
    <name type="ordered locus">APJL_1109</name>
</gene>
<accession>B0BQ30</accession>
<feature type="chain" id="PRO_1000192987" description="Phosphoribosylformylglycinamidine cyclo-ligase">
    <location>
        <begin position="1"/>
        <end position="345"/>
    </location>
</feature>
<protein>
    <recommendedName>
        <fullName evidence="1">Phosphoribosylformylglycinamidine cyclo-ligase</fullName>
        <ecNumber evidence="1">6.3.3.1</ecNumber>
    </recommendedName>
    <alternativeName>
        <fullName evidence="1">AIR synthase</fullName>
    </alternativeName>
    <alternativeName>
        <fullName evidence="1">AIRS</fullName>
    </alternativeName>
    <alternativeName>
        <fullName evidence="1">Phosphoribosyl-aminoimidazole synthetase</fullName>
    </alternativeName>
</protein>
<evidence type="ECO:0000255" key="1">
    <source>
        <dbReference type="HAMAP-Rule" id="MF_00741"/>
    </source>
</evidence>
<sequence length="345" mass="36867">MSNTQLSYKDAGVDIHAGNELVERIKGDVKRTRRPEVMGGLGGFGALCALPTKYKEPILVSGTDGVGTKLRLAIDLNKHDTIGQDLVAMCVNDLVVQGAEPLFFLDYYATGKLEVDVAADVIKGIADGCEISGCALVGGETAEMPGMYHEGDYDLAGFCVGVVEKSEIIDGSAVKAGDVLLALASSGPHSNGYSLIRKVIEVSGANPATDTLEGKPLSEHLLAPTKIYVKSVLQLIKQADVHAIAHLTGGGFWENIPRVLPATAKAVIDEKSWEWPAAFKWLQEKGNISRYEMYRTFNCGVGMVIALPEKDIETALAVLKQAGENAWVIGKIENLGEGSEQVEII</sequence>
<reference key="1">
    <citation type="journal article" date="2008" name="PLoS ONE">
        <title>Genome biology of Actinobacillus pleuropneumoniae JL03, an isolate of serotype 3 prevalent in China.</title>
        <authorList>
            <person name="Xu Z."/>
            <person name="Zhou Y."/>
            <person name="Li L."/>
            <person name="Zhou R."/>
            <person name="Xiao S."/>
            <person name="Wan Y."/>
            <person name="Zhang S."/>
            <person name="Wang K."/>
            <person name="Li W."/>
            <person name="Li L."/>
            <person name="Jin H."/>
            <person name="Kang M."/>
            <person name="Dalai B."/>
            <person name="Li T."/>
            <person name="Liu L."/>
            <person name="Cheng Y."/>
            <person name="Zhang L."/>
            <person name="Xu T."/>
            <person name="Zheng H."/>
            <person name="Pu S."/>
            <person name="Wang B."/>
            <person name="Gu W."/>
            <person name="Zhang X.L."/>
            <person name="Zhu G.-F."/>
            <person name="Wang S."/>
            <person name="Zhao G.-P."/>
            <person name="Chen H."/>
        </authorList>
    </citation>
    <scope>NUCLEOTIDE SEQUENCE [LARGE SCALE GENOMIC DNA]</scope>
    <source>
        <strain>JL03</strain>
    </source>
</reference>
<keyword id="KW-0067">ATP-binding</keyword>
<keyword id="KW-0963">Cytoplasm</keyword>
<keyword id="KW-0436">Ligase</keyword>
<keyword id="KW-0547">Nucleotide-binding</keyword>
<keyword id="KW-0658">Purine biosynthesis</keyword>
<name>PUR5_ACTPJ</name>